<keyword id="KW-1185">Reference proteome</keyword>
<reference key="1">
    <citation type="journal article" date="2005" name="Nucleic Acids Res.">
        <title>The genome sequence of Xanthomonas oryzae pathovar oryzae KACC10331, the bacterial blight pathogen of rice.</title>
        <authorList>
            <person name="Lee B.-M."/>
            <person name="Park Y.-J."/>
            <person name="Park D.-S."/>
            <person name="Kang H.-W."/>
            <person name="Kim J.-G."/>
            <person name="Song E.-S."/>
            <person name="Park I.-C."/>
            <person name="Yoon U.-H."/>
            <person name="Hahn J.-H."/>
            <person name="Koo B.-S."/>
            <person name="Lee G.-B."/>
            <person name="Kim H."/>
            <person name="Park H.-S."/>
            <person name="Yoon K.-O."/>
            <person name="Kim J.-H."/>
            <person name="Jung C.-H."/>
            <person name="Koh N.-H."/>
            <person name="Seo J.-S."/>
            <person name="Go S.-J."/>
        </authorList>
    </citation>
    <scope>NUCLEOTIDE SEQUENCE [LARGE SCALE GENOMIC DNA]</scope>
    <source>
        <strain>KACC10331 / KXO85</strain>
    </source>
</reference>
<gene>
    <name type="ordered locus">XOO0464</name>
</gene>
<accession>Q5H5Q2</accession>
<protein>
    <recommendedName>
        <fullName evidence="1">YcgL domain-containing protein XOO0464</fullName>
    </recommendedName>
</protein>
<evidence type="ECO:0000255" key="1">
    <source>
        <dbReference type="HAMAP-Rule" id="MF_01866"/>
    </source>
</evidence>
<evidence type="ECO:0000305" key="2"/>
<comment type="sequence caution" evidence="2">
    <conflict type="erroneous initiation">
        <sequence resource="EMBL-CDS" id="AAW73718"/>
    </conflict>
</comment>
<dbReference type="EMBL" id="AE013598">
    <property type="protein sequence ID" value="AAW73718.1"/>
    <property type="status" value="ALT_INIT"/>
    <property type="molecule type" value="Genomic_DNA"/>
</dbReference>
<dbReference type="SMR" id="Q5H5Q2"/>
<dbReference type="STRING" id="291331.XOO0464"/>
<dbReference type="KEGG" id="xoo:XOO0464"/>
<dbReference type="HOGENOM" id="CLU_155118_0_0_6"/>
<dbReference type="Proteomes" id="UP000006735">
    <property type="component" value="Chromosome"/>
</dbReference>
<dbReference type="Gene3D" id="3.10.510.20">
    <property type="entry name" value="YcgL domain"/>
    <property type="match status" value="1"/>
</dbReference>
<dbReference type="HAMAP" id="MF_01866">
    <property type="entry name" value="UPF0745"/>
    <property type="match status" value="1"/>
</dbReference>
<dbReference type="InterPro" id="IPR038068">
    <property type="entry name" value="YcgL-like_sf"/>
</dbReference>
<dbReference type="InterPro" id="IPR027354">
    <property type="entry name" value="YcgL_dom"/>
</dbReference>
<dbReference type="PANTHER" id="PTHR38109">
    <property type="entry name" value="PROTEIN YCGL"/>
    <property type="match status" value="1"/>
</dbReference>
<dbReference type="PANTHER" id="PTHR38109:SF1">
    <property type="entry name" value="PROTEIN YCGL"/>
    <property type="match status" value="1"/>
</dbReference>
<dbReference type="Pfam" id="PF05166">
    <property type="entry name" value="YcgL"/>
    <property type="match status" value="1"/>
</dbReference>
<dbReference type="SUPFAM" id="SSF160191">
    <property type="entry name" value="YcgL-like"/>
    <property type="match status" value="1"/>
</dbReference>
<dbReference type="PROSITE" id="PS51648">
    <property type="entry name" value="YCGL"/>
    <property type="match status" value="1"/>
</dbReference>
<feature type="chain" id="PRO_0000375407" description="YcgL domain-containing protein XOO0464">
    <location>
        <begin position="1"/>
        <end position="86"/>
    </location>
</feature>
<feature type="domain" description="YcgL" evidence="1">
    <location>
        <begin position="1"/>
        <end position="83"/>
    </location>
</feature>
<sequence length="86" mass="9723">MHAYVYKSQRKQDTFVYLATRDDFSGLPAEVQAQLAPFSFVLEVALTPERRLAQADVATVREALGKHGFYLQLPKTRVLAGECDYD</sequence>
<proteinExistence type="inferred from homology"/>
<name>Y464_XANOR</name>
<organism>
    <name type="scientific">Xanthomonas oryzae pv. oryzae (strain KACC10331 / KXO85)</name>
    <dbReference type="NCBI Taxonomy" id="291331"/>
    <lineage>
        <taxon>Bacteria</taxon>
        <taxon>Pseudomonadati</taxon>
        <taxon>Pseudomonadota</taxon>
        <taxon>Gammaproteobacteria</taxon>
        <taxon>Lysobacterales</taxon>
        <taxon>Lysobacteraceae</taxon>
        <taxon>Xanthomonas</taxon>
    </lineage>
</organism>